<protein>
    <recommendedName>
        <fullName evidence="1">Beta-hexosaminidase</fullName>
        <ecNumber evidence="1">3.2.1.52</ecNumber>
    </recommendedName>
    <alternativeName>
        <fullName evidence="1">Beta-N-acetylhexosaminidase</fullName>
    </alternativeName>
    <alternativeName>
        <fullName evidence="1">N-acetyl-beta-glucosaminidase</fullName>
    </alternativeName>
</protein>
<accession>B8GSD2</accession>
<proteinExistence type="inferred from homology"/>
<sequence length="347" mass="38365">MSLGPVMLDLEGTALTETERRLLTHPRAGGVILFTRNFESLGQLTELLREIHALRTPRLLVAVDHEGGRVQRFREGFTRLPAAARFGEQYDRNHARGRELARMAGWLMAAELRAVGVDFSFAPVLDLAHGVSGVIGDRAFHRNPEVVADLAHHYMSGMQHAGMAAVGKHFPGHGGVREDSHLALPVDRRTPADLYTDILPFERMVRFGLAGIMPAHVVYERCDPLPAGFSSYWLRGELRDRLGFEGVIFSDDLSMAGAECMGDYPDRARAALKAGCDMVLVCNHPEQAARVLDALDDEPDPVSIARLARMHGRKGMTWGELTDSDEWQKARAVINALDDSPLMELDV</sequence>
<gene>
    <name evidence="1" type="primary">nagZ</name>
    <name type="ordered locus">Tgr7_1754</name>
</gene>
<name>NAGZ_THISH</name>
<dbReference type="EC" id="3.2.1.52" evidence="1"/>
<dbReference type="EMBL" id="CP001339">
    <property type="protein sequence ID" value="ACL72836.1"/>
    <property type="molecule type" value="Genomic_DNA"/>
</dbReference>
<dbReference type="RefSeq" id="WP_012638318.1">
    <property type="nucleotide sequence ID" value="NC_011901.1"/>
</dbReference>
<dbReference type="SMR" id="B8GSD2"/>
<dbReference type="STRING" id="396588.Tgr7_1754"/>
<dbReference type="CAZy" id="GH3">
    <property type="family name" value="Glycoside Hydrolase Family 3"/>
</dbReference>
<dbReference type="KEGG" id="tgr:Tgr7_1754"/>
<dbReference type="eggNOG" id="COG1472">
    <property type="taxonomic scope" value="Bacteria"/>
</dbReference>
<dbReference type="HOGENOM" id="CLU_008392_0_0_6"/>
<dbReference type="OrthoDB" id="9786661at2"/>
<dbReference type="UniPathway" id="UPA00544"/>
<dbReference type="Proteomes" id="UP000002383">
    <property type="component" value="Chromosome"/>
</dbReference>
<dbReference type="GO" id="GO:0005737">
    <property type="term" value="C:cytoplasm"/>
    <property type="evidence" value="ECO:0007669"/>
    <property type="project" value="UniProtKB-SubCell"/>
</dbReference>
<dbReference type="GO" id="GO:0004563">
    <property type="term" value="F:beta-N-acetylhexosaminidase activity"/>
    <property type="evidence" value="ECO:0007669"/>
    <property type="project" value="UniProtKB-UniRule"/>
</dbReference>
<dbReference type="GO" id="GO:0005975">
    <property type="term" value="P:carbohydrate metabolic process"/>
    <property type="evidence" value="ECO:0007669"/>
    <property type="project" value="InterPro"/>
</dbReference>
<dbReference type="GO" id="GO:0051301">
    <property type="term" value="P:cell division"/>
    <property type="evidence" value="ECO:0007669"/>
    <property type="project" value="UniProtKB-KW"/>
</dbReference>
<dbReference type="GO" id="GO:0071555">
    <property type="term" value="P:cell wall organization"/>
    <property type="evidence" value="ECO:0007669"/>
    <property type="project" value="UniProtKB-KW"/>
</dbReference>
<dbReference type="GO" id="GO:0009252">
    <property type="term" value="P:peptidoglycan biosynthetic process"/>
    <property type="evidence" value="ECO:0007669"/>
    <property type="project" value="UniProtKB-KW"/>
</dbReference>
<dbReference type="GO" id="GO:0009254">
    <property type="term" value="P:peptidoglycan turnover"/>
    <property type="evidence" value="ECO:0007669"/>
    <property type="project" value="UniProtKB-UniRule"/>
</dbReference>
<dbReference type="GO" id="GO:0008360">
    <property type="term" value="P:regulation of cell shape"/>
    <property type="evidence" value="ECO:0007669"/>
    <property type="project" value="UniProtKB-KW"/>
</dbReference>
<dbReference type="FunFam" id="3.20.20.300:FF:000001">
    <property type="entry name" value="Beta-hexosaminidase"/>
    <property type="match status" value="1"/>
</dbReference>
<dbReference type="Gene3D" id="3.20.20.300">
    <property type="entry name" value="Glycoside hydrolase, family 3, N-terminal domain"/>
    <property type="match status" value="1"/>
</dbReference>
<dbReference type="HAMAP" id="MF_00364">
    <property type="entry name" value="NagZ"/>
    <property type="match status" value="1"/>
</dbReference>
<dbReference type="InterPro" id="IPR022956">
    <property type="entry name" value="Beta_hexosaminidase_bac"/>
</dbReference>
<dbReference type="InterPro" id="IPR001764">
    <property type="entry name" value="Glyco_hydro_3_N"/>
</dbReference>
<dbReference type="InterPro" id="IPR036962">
    <property type="entry name" value="Glyco_hydro_3_N_sf"/>
</dbReference>
<dbReference type="InterPro" id="IPR017853">
    <property type="entry name" value="Glycoside_hydrolase_SF"/>
</dbReference>
<dbReference type="InterPro" id="IPR050226">
    <property type="entry name" value="NagZ_Beta-hexosaminidase"/>
</dbReference>
<dbReference type="NCBIfam" id="NF003740">
    <property type="entry name" value="PRK05337.1"/>
    <property type="match status" value="1"/>
</dbReference>
<dbReference type="PANTHER" id="PTHR30480:SF13">
    <property type="entry name" value="BETA-HEXOSAMINIDASE"/>
    <property type="match status" value="1"/>
</dbReference>
<dbReference type="PANTHER" id="PTHR30480">
    <property type="entry name" value="BETA-HEXOSAMINIDASE-RELATED"/>
    <property type="match status" value="1"/>
</dbReference>
<dbReference type="Pfam" id="PF00933">
    <property type="entry name" value="Glyco_hydro_3"/>
    <property type="match status" value="1"/>
</dbReference>
<dbReference type="SUPFAM" id="SSF51445">
    <property type="entry name" value="(Trans)glycosidases"/>
    <property type="match status" value="1"/>
</dbReference>
<organism>
    <name type="scientific">Thioalkalivibrio sulfidiphilus (strain HL-EbGR7)</name>
    <dbReference type="NCBI Taxonomy" id="396588"/>
    <lineage>
        <taxon>Bacteria</taxon>
        <taxon>Pseudomonadati</taxon>
        <taxon>Pseudomonadota</taxon>
        <taxon>Gammaproteobacteria</taxon>
        <taxon>Chromatiales</taxon>
        <taxon>Ectothiorhodospiraceae</taxon>
        <taxon>Thioalkalivibrio</taxon>
    </lineage>
</organism>
<evidence type="ECO:0000255" key="1">
    <source>
        <dbReference type="HAMAP-Rule" id="MF_00364"/>
    </source>
</evidence>
<reference key="1">
    <citation type="journal article" date="2011" name="Stand. Genomic Sci.">
        <title>Complete genome sequence of 'Thioalkalivibrio sulfidophilus' HL-EbGr7.</title>
        <authorList>
            <person name="Muyzer G."/>
            <person name="Sorokin D.Y."/>
            <person name="Mavromatis K."/>
            <person name="Lapidus A."/>
            <person name="Clum A."/>
            <person name="Ivanova N."/>
            <person name="Pati A."/>
            <person name="d'Haeseleer P."/>
            <person name="Woyke T."/>
            <person name="Kyrpides N.C."/>
        </authorList>
    </citation>
    <scope>NUCLEOTIDE SEQUENCE [LARGE SCALE GENOMIC DNA]</scope>
    <source>
        <strain>HL-EbGR7</strain>
    </source>
</reference>
<feature type="chain" id="PRO_1000133666" description="Beta-hexosaminidase">
    <location>
        <begin position="1"/>
        <end position="347"/>
    </location>
</feature>
<feature type="active site" description="Proton donor/acceptor" evidence="1">
    <location>
        <position position="181"/>
    </location>
</feature>
<feature type="active site" description="Nucleophile" evidence="1">
    <location>
        <position position="251"/>
    </location>
</feature>
<feature type="binding site" evidence="1">
    <location>
        <position position="64"/>
    </location>
    <ligand>
        <name>substrate</name>
    </ligand>
</feature>
<feature type="binding site" evidence="1">
    <location>
        <position position="72"/>
    </location>
    <ligand>
        <name>substrate</name>
    </ligand>
</feature>
<feature type="binding site" evidence="1">
    <location>
        <position position="138"/>
    </location>
    <ligand>
        <name>substrate</name>
    </ligand>
</feature>
<feature type="binding site" evidence="1">
    <location>
        <begin position="168"/>
        <end position="169"/>
    </location>
    <ligand>
        <name>substrate</name>
    </ligand>
</feature>
<feature type="site" description="Important for catalytic activity" evidence="1">
    <location>
        <position position="179"/>
    </location>
</feature>
<comment type="function">
    <text evidence="1">Plays a role in peptidoglycan recycling by cleaving the terminal beta-1,4-linked N-acetylglucosamine (GlcNAc) from peptide-linked peptidoglycan fragments, giving rise to free GlcNAc, anhydro-N-acetylmuramic acid and anhydro-N-acetylmuramic acid-linked peptides.</text>
</comment>
<comment type="catalytic activity">
    <reaction evidence="1">
        <text>Hydrolysis of terminal non-reducing N-acetyl-D-hexosamine residues in N-acetyl-beta-D-hexosaminides.</text>
        <dbReference type="EC" id="3.2.1.52"/>
    </reaction>
</comment>
<comment type="pathway">
    <text evidence="1">Cell wall biogenesis; peptidoglycan recycling.</text>
</comment>
<comment type="subcellular location">
    <subcellularLocation>
        <location evidence="1">Cytoplasm</location>
    </subcellularLocation>
</comment>
<comment type="similarity">
    <text evidence="1">Belongs to the glycosyl hydrolase 3 family. NagZ subfamily.</text>
</comment>
<keyword id="KW-0131">Cell cycle</keyword>
<keyword id="KW-0132">Cell division</keyword>
<keyword id="KW-0133">Cell shape</keyword>
<keyword id="KW-0961">Cell wall biogenesis/degradation</keyword>
<keyword id="KW-0963">Cytoplasm</keyword>
<keyword id="KW-0326">Glycosidase</keyword>
<keyword id="KW-0378">Hydrolase</keyword>
<keyword id="KW-0573">Peptidoglycan synthesis</keyword>
<keyword id="KW-1185">Reference proteome</keyword>